<evidence type="ECO:0000256" key="1">
    <source>
        <dbReference type="SAM" id="MobiDB-lite"/>
    </source>
</evidence>
<evidence type="ECO:0007744" key="2">
    <source>
    </source>
</evidence>
<evidence type="ECO:0007744" key="3">
    <source>
    </source>
</evidence>
<evidence type="ECO:0007744" key="4">
    <source>
    </source>
</evidence>
<name>FWCH2_HUMAN</name>
<feature type="chain" id="PRO_0000316523" description="FLYWCH family member 2">
    <location>
        <begin position="1"/>
        <end position="140"/>
    </location>
</feature>
<feature type="region of interest" description="Disordered" evidence="1">
    <location>
        <begin position="1"/>
        <end position="39"/>
    </location>
</feature>
<feature type="region of interest" description="Disordered" evidence="1">
    <location>
        <begin position="84"/>
        <end position="140"/>
    </location>
</feature>
<feature type="compositionally biased region" description="Basic and acidic residues" evidence="1">
    <location>
        <begin position="98"/>
        <end position="114"/>
    </location>
</feature>
<feature type="compositionally biased region" description="Low complexity" evidence="1">
    <location>
        <begin position="118"/>
        <end position="127"/>
    </location>
</feature>
<feature type="modified residue" description="Phosphoserine" evidence="2 3 4">
    <location>
        <position position="21"/>
    </location>
</feature>
<keyword id="KW-0597">Phosphoprotein</keyword>
<keyword id="KW-1267">Proteomics identification</keyword>
<keyword id="KW-1185">Reference proteome</keyword>
<sequence length="140" mass="14564">MPLPEPSEQEGESVKASQEPSPKPGTEVIPAAPRKPRKFSKLVLLTASKDSTKVAGAKRKGVHCVMSLGVPGPATLAKALLQTHPEAQRAIEAAPQEPEQKRSRQDPGTDRTEDSGLAAGPPEAAGENFAPCSVAPGKSL</sequence>
<dbReference type="EMBL" id="CH471112">
    <property type="protein sequence ID" value="EAW85455.1"/>
    <property type="molecule type" value="Genomic_DNA"/>
</dbReference>
<dbReference type="EMBL" id="BC014089">
    <property type="protein sequence ID" value="AAH14089.1"/>
    <property type="molecule type" value="mRNA"/>
</dbReference>
<dbReference type="CCDS" id="CCDS10482.1"/>
<dbReference type="RefSeq" id="NP_001135971.1">
    <property type="nucleotide sequence ID" value="NM_001142499.1"/>
</dbReference>
<dbReference type="RefSeq" id="NP_001135972.1">
    <property type="nucleotide sequence ID" value="NM_001142500.1"/>
</dbReference>
<dbReference type="RefSeq" id="NP_612448.1">
    <property type="nucleotide sequence ID" value="NM_138439.3"/>
</dbReference>
<dbReference type="RefSeq" id="XP_005255135.1">
    <property type="nucleotide sequence ID" value="XM_005255078.6"/>
</dbReference>
<dbReference type="RefSeq" id="XP_054235483.1">
    <property type="nucleotide sequence ID" value="XM_054379508.1"/>
</dbReference>
<dbReference type="BioGRID" id="125404">
    <property type="interactions" value="63"/>
</dbReference>
<dbReference type="FunCoup" id="Q96CP2">
    <property type="interactions" value="333"/>
</dbReference>
<dbReference type="IntAct" id="Q96CP2">
    <property type="interactions" value="48"/>
</dbReference>
<dbReference type="MINT" id="Q96CP2"/>
<dbReference type="STRING" id="9606.ENSP00000380159"/>
<dbReference type="GlyGen" id="Q96CP2">
    <property type="glycosylation" value="1 site, 1 O-linked glycan (1 site)"/>
</dbReference>
<dbReference type="iPTMnet" id="Q96CP2"/>
<dbReference type="PhosphoSitePlus" id="Q96CP2"/>
<dbReference type="BioMuta" id="FLYWCH2"/>
<dbReference type="jPOST" id="Q96CP2"/>
<dbReference type="MassIVE" id="Q96CP2"/>
<dbReference type="PaxDb" id="9606-ENSP00000380159"/>
<dbReference type="PeptideAtlas" id="Q96CP2"/>
<dbReference type="ProteomicsDB" id="76202"/>
<dbReference type="Pumba" id="Q96CP2"/>
<dbReference type="TopDownProteomics" id="Q96CP2"/>
<dbReference type="Antibodypedia" id="52358">
    <property type="antibodies" value="76 antibodies from 13 providers"/>
</dbReference>
<dbReference type="DNASU" id="114984"/>
<dbReference type="Ensembl" id="ENST00000293981.10">
    <property type="protein sequence ID" value="ENSP00000293981.6"/>
    <property type="gene ID" value="ENSG00000162076.13"/>
</dbReference>
<dbReference type="Ensembl" id="ENST00000396958.8">
    <property type="protein sequence ID" value="ENSP00000380159.3"/>
    <property type="gene ID" value="ENSG00000162076.13"/>
</dbReference>
<dbReference type="GeneID" id="114984"/>
<dbReference type="KEGG" id="hsa:114984"/>
<dbReference type="MANE-Select" id="ENST00000396958.8">
    <property type="protein sequence ID" value="ENSP00000380159.3"/>
    <property type="RefSeq nucleotide sequence ID" value="NM_138439.3"/>
    <property type="RefSeq protein sequence ID" value="NP_612448.1"/>
</dbReference>
<dbReference type="UCSC" id="uc002csa.4">
    <property type="organism name" value="human"/>
</dbReference>
<dbReference type="AGR" id="HGNC:25178"/>
<dbReference type="CTD" id="114984"/>
<dbReference type="GeneCards" id="FLYWCH2"/>
<dbReference type="HGNC" id="HGNC:25178">
    <property type="gene designation" value="FLYWCH2"/>
</dbReference>
<dbReference type="HPA" id="ENSG00000162076">
    <property type="expression patterns" value="Low tissue specificity"/>
</dbReference>
<dbReference type="neXtProt" id="NX_Q96CP2"/>
<dbReference type="OpenTargets" id="ENSG00000162076"/>
<dbReference type="PharmGKB" id="PA162388745"/>
<dbReference type="VEuPathDB" id="HostDB:ENSG00000162076"/>
<dbReference type="eggNOG" id="ENOG502T3Y9">
    <property type="taxonomic scope" value="Eukaryota"/>
</dbReference>
<dbReference type="GeneTree" id="ENSGT00530000064166"/>
<dbReference type="HOGENOM" id="CLU_149723_0_0_1"/>
<dbReference type="InParanoid" id="Q96CP2"/>
<dbReference type="OMA" id="PTVCPSM"/>
<dbReference type="OrthoDB" id="9836688at2759"/>
<dbReference type="PAN-GO" id="Q96CP2">
    <property type="GO annotations" value="0 GO annotations based on evolutionary models"/>
</dbReference>
<dbReference type="PhylomeDB" id="Q96CP2"/>
<dbReference type="TreeFam" id="TF338211"/>
<dbReference type="PathwayCommons" id="Q96CP2"/>
<dbReference type="SignaLink" id="Q96CP2"/>
<dbReference type="BioGRID-ORCS" id="114984">
    <property type="hits" value="15 hits in 1153 CRISPR screens"/>
</dbReference>
<dbReference type="ChiTaRS" id="FLYWCH2">
    <property type="organism name" value="human"/>
</dbReference>
<dbReference type="GenomeRNAi" id="114984"/>
<dbReference type="Pharos" id="Q96CP2">
    <property type="development level" value="Tdark"/>
</dbReference>
<dbReference type="PRO" id="PR:Q96CP2"/>
<dbReference type="Proteomes" id="UP000005640">
    <property type="component" value="Chromosome 16"/>
</dbReference>
<dbReference type="RNAct" id="Q96CP2">
    <property type="molecule type" value="protein"/>
</dbReference>
<dbReference type="Bgee" id="ENSG00000162076">
    <property type="expression patterns" value="Expressed in tendon of biceps brachii and 181 other cell types or tissues"/>
</dbReference>
<dbReference type="ExpressionAtlas" id="Q96CP2">
    <property type="expression patterns" value="baseline and differential"/>
</dbReference>
<dbReference type="GO" id="GO:0003723">
    <property type="term" value="F:RNA binding"/>
    <property type="evidence" value="ECO:0007005"/>
    <property type="project" value="UniProtKB"/>
</dbReference>
<dbReference type="InterPro" id="IPR029279">
    <property type="entry name" value="FLYWCH_N"/>
</dbReference>
<dbReference type="InterPro" id="IPR040312">
    <property type="entry name" value="FWCH1/FWCH2"/>
</dbReference>
<dbReference type="PANTHER" id="PTHR31665:SF0">
    <property type="entry name" value="FLYWCH FAMILY MEMBER 2"/>
    <property type="match status" value="1"/>
</dbReference>
<dbReference type="PANTHER" id="PTHR31665">
    <property type="entry name" value="FLYWCH FAMILY MEMBER 2-RELATED"/>
    <property type="match status" value="1"/>
</dbReference>
<dbReference type="Pfam" id="PF15423">
    <property type="entry name" value="FLYWCH_N"/>
    <property type="match status" value="1"/>
</dbReference>
<protein>
    <recommendedName>
        <fullName>FLYWCH family member 2</fullName>
    </recommendedName>
</protein>
<gene>
    <name type="primary">FLYWCH2</name>
</gene>
<reference key="1">
    <citation type="submission" date="2005-09" db="EMBL/GenBank/DDBJ databases">
        <authorList>
            <person name="Mural R.J."/>
            <person name="Istrail S."/>
            <person name="Sutton G.G."/>
            <person name="Florea L."/>
            <person name="Halpern A.L."/>
            <person name="Mobarry C.M."/>
            <person name="Lippert R."/>
            <person name="Walenz B."/>
            <person name="Shatkay H."/>
            <person name="Dew I."/>
            <person name="Miller J.R."/>
            <person name="Flanigan M.J."/>
            <person name="Edwards N.J."/>
            <person name="Bolanos R."/>
            <person name="Fasulo D."/>
            <person name="Halldorsson B.V."/>
            <person name="Hannenhalli S."/>
            <person name="Turner R."/>
            <person name="Yooseph S."/>
            <person name="Lu F."/>
            <person name="Nusskern D.R."/>
            <person name="Shue B.C."/>
            <person name="Zheng X.H."/>
            <person name="Zhong F."/>
            <person name="Delcher A.L."/>
            <person name="Huson D.H."/>
            <person name="Kravitz S.A."/>
            <person name="Mouchard L."/>
            <person name="Reinert K."/>
            <person name="Remington K.A."/>
            <person name="Clark A.G."/>
            <person name="Waterman M.S."/>
            <person name="Eichler E.E."/>
            <person name="Adams M.D."/>
            <person name="Hunkapiller M.W."/>
            <person name="Myers E.W."/>
            <person name="Venter J.C."/>
        </authorList>
    </citation>
    <scope>NUCLEOTIDE SEQUENCE [LARGE SCALE GENOMIC DNA]</scope>
</reference>
<reference key="2">
    <citation type="journal article" date="2004" name="Genome Res.">
        <title>The status, quality, and expansion of the NIH full-length cDNA project: the Mammalian Gene Collection (MGC).</title>
        <authorList>
            <consortium name="The MGC Project Team"/>
        </authorList>
    </citation>
    <scope>NUCLEOTIDE SEQUENCE [LARGE SCALE MRNA]</scope>
    <source>
        <tissue>Uterus</tissue>
    </source>
</reference>
<reference key="3">
    <citation type="journal article" date="2008" name="Proc. Natl. Acad. Sci. U.S.A.">
        <title>A quantitative atlas of mitotic phosphorylation.</title>
        <authorList>
            <person name="Dephoure N."/>
            <person name="Zhou C."/>
            <person name="Villen J."/>
            <person name="Beausoleil S.A."/>
            <person name="Bakalarski C.E."/>
            <person name="Elledge S.J."/>
            <person name="Gygi S.P."/>
        </authorList>
    </citation>
    <scope>PHOSPHORYLATION [LARGE SCALE ANALYSIS] AT SER-21</scope>
    <scope>IDENTIFICATION BY MASS SPECTROMETRY [LARGE SCALE ANALYSIS]</scope>
    <source>
        <tissue>Cervix carcinoma</tissue>
    </source>
</reference>
<reference key="4">
    <citation type="journal article" date="2010" name="Sci. Signal.">
        <title>Quantitative phosphoproteomics reveals widespread full phosphorylation site occupancy during mitosis.</title>
        <authorList>
            <person name="Olsen J.V."/>
            <person name="Vermeulen M."/>
            <person name="Santamaria A."/>
            <person name="Kumar C."/>
            <person name="Miller M.L."/>
            <person name="Jensen L.J."/>
            <person name="Gnad F."/>
            <person name="Cox J."/>
            <person name="Jensen T.S."/>
            <person name="Nigg E.A."/>
            <person name="Brunak S."/>
            <person name="Mann M."/>
        </authorList>
    </citation>
    <scope>PHOSPHORYLATION [LARGE SCALE ANALYSIS] AT SER-21</scope>
    <scope>IDENTIFICATION BY MASS SPECTROMETRY [LARGE SCALE ANALYSIS]</scope>
    <source>
        <tissue>Cervix carcinoma</tissue>
    </source>
</reference>
<reference key="5">
    <citation type="journal article" date="2011" name="BMC Syst. Biol.">
        <title>Initial characterization of the human central proteome.</title>
        <authorList>
            <person name="Burkard T.R."/>
            <person name="Planyavsky M."/>
            <person name="Kaupe I."/>
            <person name="Breitwieser F.P."/>
            <person name="Buerckstuemmer T."/>
            <person name="Bennett K.L."/>
            <person name="Superti-Furga G."/>
            <person name="Colinge J."/>
        </authorList>
    </citation>
    <scope>IDENTIFICATION BY MASS SPECTROMETRY [LARGE SCALE ANALYSIS]</scope>
</reference>
<reference key="6">
    <citation type="journal article" date="2013" name="J. Proteome Res.">
        <title>Toward a comprehensive characterization of a human cancer cell phosphoproteome.</title>
        <authorList>
            <person name="Zhou H."/>
            <person name="Di Palma S."/>
            <person name="Preisinger C."/>
            <person name="Peng M."/>
            <person name="Polat A.N."/>
            <person name="Heck A.J."/>
            <person name="Mohammed S."/>
        </authorList>
    </citation>
    <scope>PHOSPHORYLATION [LARGE SCALE ANALYSIS] AT SER-21</scope>
    <scope>IDENTIFICATION BY MASS SPECTROMETRY [LARGE SCALE ANALYSIS]</scope>
    <source>
        <tissue>Cervix carcinoma</tissue>
        <tissue>Erythroleukemia</tissue>
    </source>
</reference>
<proteinExistence type="evidence at protein level"/>
<organism>
    <name type="scientific">Homo sapiens</name>
    <name type="common">Human</name>
    <dbReference type="NCBI Taxonomy" id="9606"/>
    <lineage>
        <taxon>Eukaryota</taxon>
        <taxon>Metazoa</taxon>
        <taxon>Chordata</taxon>
        <taxon>Craniata</taxon>
        <taxon>Vertebrata</taxon>
        <taxon>Euteleostomi</taxon>
        <taxon>Mammalia</taxon>
        <taxon>Eutheria</taxon>
        <taxon>Euarchontoglires</taxon>
        <taxon>Primates</taxon>
        <taxon>Haplorrhini</taxon>
        <taxon>Catarrhini</taxon>
        <taxon>Hominidae</taxon>
        <taxon>Homo</taxon>
    </lineage>
</organism>
<accession>Q96CP2</accession>